<accession>A2QAU6</accession>
<protein>
    <recommendedName>
        <fullName>tRNA-dihydrouridine(47) synthase [NAD(P)(+)]</fullName>
        <ecNumber evidence="1">1.3.1.89</ecNumber>
    </recommendedName>
    <alternativeName>
        <fullName>mRNA-dihydrouridine synthase dus3</fullName>
        <ecNumber evidence="3">1.3.1.-</ecNumber>
    </alternativeName>
    <alternativeName>
        <fullName>tRNA-dihydrouridine synthase 3</fullName>
    </alternativeName>
</protein>
<reference key="1">
    <citation type="journal article" date="2007" name="Nat. Biotechnol.">
        <title>Genome sequencing and analysis of the versatile cell factory Aspergillus niger CBS 513.88.</title>
        <authorList>
            <person name="Pel H.J."/>
            <person name="de Winde J.H."/>
            <person name="Archer D.B."/>
            <person name="Dyer P.S."/>
            <person name="Hofmann G."/>
            <person name="Schaap P.J."/>
            <person name="Turner G."/>
            <person name="de Vries R.P."/>
            <person name="Albang R."/>
            <person name="Albermann K."/>
            <person name="Andersen M.R."/>
            <person name="Bendtsen J.D."/>
            <person name="Benen J.A.E."/>
            <person name="van den Berg M."/>
            <person name="Breestraat S."/>
            <person name="Caddick M.X."/>
            <person name="Contreras R."/>
            <person name="Cornell M."/>
            <person name="Coutinho P.M."/>
            <person name="Danchin E.G.J."/>
            <person name="Debets A.J.M."/>
            <person name="Dekker P."/>
            <person name="van Dijck P.W.M."/>
            <person name="van Dijk A."/>
            <person name="Dijkhuizen L."/>
            <person name="Driessen A.J.M."/>
            <person name="d'Enfert C."/>
            <person name="Geysens S."/>
            <person name="Goosen C."/>
            <person name="Groot G.S.P."/>
            <person name="de Groot P.W.J."/>
            <person name="Guillemette T."/>
            <person name="Henrissat B."/>
            <person name="Herweijer M."/>
            <person name="van den Hombergh J.P.T.W."/>
            <person name="van den Hondel C.A.M.J.J."/>
            <person name="van der Heijden R.T.J.M."/>
            <person name="van der Kaaij R.M."/>
            <person name="Klis F.M."/>
            <person name="Kools H.J."/>
            <person name="Kubicek C.P."/>
            <person name="van Kuyk P.A."/>
            <person name="Lauber J."/>
            <person name="Lu X."/>
            <person name="van der Maarel M.J.E.C."/>
            <person name="Meulenberg R."/>
            <person name="Menke H."/>
            <person name="Mortimer M.A."/>
            <person name="Nielsen J."/>
            <person name="Oliver S.G."/>
            <person name="Olsthoorn M."/>
            <person name="Pal K."/>
            <person name="van Peij N.N.M.E."/>
            <person name="Ram A.F.J."/>
            <person name="Rinas U."/>
            <person name="Roubos J.A."/>
            <person name="Sagt C.M.J."/>
            <person name="Schmoll M."/>
            <person name="Sun J."/>
            <person name="Ussery D."/>
            <person name="Varga J."/>
            <person name="Vervecken W."/>
            <person name="van de Vondervoort P.J.J."/>
            <person name="Wedler H."/>
            <person name="Woesten H.A.B."/>
            <person name="Zeng A.-P."/>
            <person name="van Ooyen A.J.J."/>
            <person name="Visser J."/>
            <person name="Stam H."/>
        </authorList>
    </citation>
    <scope>NUCLEOTIDE SEQUENCE [LARGE SCALE GENOMIC DNA]</scope>
    <source>
        <strain>ATCC MYA-4892 / CBS 513.88 / FGSC A1513</strain>
    </source>
</reference>
<proteinExistence type="inferred from homology"/>
<gene>
    <name type="primary">dus3</name>
    <name type="ORF">An01g12800</name>
</gene>
<feature type="chain" id="PRO_0000330228" description="tRNA-dihydrouridine(47) synthase [NAD(P)(+)]">
    <location>
        <begin position="1"/>
        <end position="748"/>
    </location>
</feature>
<feature type="zinc finger region" description="C3H1-type 1" evidence="4">
    <location>
        <begin position="131"/>
        <end position="164"/>
    </location>
</feature>
<feature type="zinc finger region" description="C3H1-type 2" evidence="4">
    <location>
        <begin position="181"/>
        <end position="206"/>
    </location>
</feature>
<feature type="region of interest" description="Disordered" evidence="5">
    <location>
        <begin position="1"/>
        <end position="130"/>
    </location>
</feature>
<feature type="region of interest" description="Disordered" evidence="5">
    <location>
        <begin position="279"/>
        <end position="314"/>
    </location>
</feature>
<feature type="compositionally biased region" description="Low complexity" evidence="5">
    <location>
        <begin position="1"/>
        <end position="22"/>
    </location>
</feature>
<feature type="compositionally biased region" description="Basic and acidic residues" evidence="5">
    <location>
        <begin position="23"/>
        <end position="51"/>
    </location>
</feature>
<feature type="compositionally biased region" description="Basic and acidic residues" evidence="5">
    <location>
        <begin position="99"/>
        <end position="112"/>
    </location>
</feature>
<feature type="compositionally biased region" description="Basic and acidic residues" evidence="5">
    <location>
        <begin position="292"/>
        <end position="314"/>
    </location>
</feature>
<feature type="active site" description="Proton donor" evidence="2">
    <location>
        <position position="450"/>
    </location>
</feature>
<feature type="binding site" evidence="2">
    <location>
        <begin position="343"/>
        <end position="345"/>
    </location>
    <ligand>
        <name>FMN</name>
        <dbReference type="ChEBI" id="CHEBI:58210"/>
    </ligand>
</feature>
<feature type="binding site" evidence="2">
    <location>
        <position position="418"/>
    </location>
    <ligand>
        <name>FMN</name>
        <dbReference type="ChEBI" id="CHEBI:58210"/>
    </ligand>
</feature>
<feature type="binding site" evidence="2">
    <location>
        <position position="490"/>
    </location>
    <ligand>
        <name>FMN</name>
        <dbReference type="ChEBI" id="CHEBI:58210"/>
    </ligand>
</feature>
<feature type="binding site" evidence="2">
    <location>
        <position position="533"/>
    </location>
    <ligand>
        <name>FMN</name>
        <dbReference type="ChEBI" id="CHEBI:58210"/>
    </ligand>
</feature>
<feature type="binding site" evidence="2">
    <location>
        <begin position="590"/>
        <end position="592"/>
    </location>
    <ligand>
        <name>FMN</name>
        <dbReference type="ChEBI" id="CHEBI:58210"/>
    </ligand>
</feature>
<feature type="binding site" evidence="2">
    <location>
        <begin position="614"/>
        <end position="615"/>
    </location>
    <ligand>
        <name>FMN</name>
        <dbReference type="ChEBI" id="CHEBI:58210"/>
    </ligand>
</feature>
<comment type="function">
    <text evidence="1 3">Catalyzes the synthesis of dihydrouridine, a modified base found in the D-loop of most tRNAs. Specifically modifies U47 in cytoplasmic tRNAs (By similarity). Catalyzes the synthesis of dihydrouridine in some mRNAs, thereby affecting their translation (By similarity).</text>
</comment>
<comment type="catalytic activity">
    <reaction evidence="1">
        <text>5,6-dihydrouridine(47) in tRNA + NAD(+) = uridine(47) in tRNA + NADH + H(+)</text>
        <dbReference type="Rhea" id="RHEA:53364"/>
        <dbReference type="Rhea" id="RHEA-COMP:13539"/>
        <dbReference type="Rhea" id="RHEA-COMP:13540"/>
        <dbReference type="ChEBI" id="CHEBI:15378"/>
        <dbReference type="ChEBI" id="CHEBI:57540"/>
        <dbReference type="ChEBI" id="CHEBI:57945"/>
        <dbReference type="ChEBI" id="CHEBI:65315"/>
        <dbReference type="ChEBI" id="CHEBI:74443"/>
        <dbReference type="EC" id="1.3.1.89"/>
    </reaction>
    <physiologicalReaction direction="right-to-left" evidence="1">
        <dbReference type="Rhea" id="RHEA:53366"/>
    </physiologicalReaction>
</comment>
<comment type="catalytic activity">
    <reaction evidence="1">
        <text>5,6-dihydrouridine(47) in tRNA + NADP(+) = uridine(47) in tRNA + NADPH + H(+)</text>
        <dbReference type="Rhea" id="RHEA:53360"/>
        <dbReference type="Rhea" id="RHEA-COMP:13539"/>
        <dbReference type="Rhea" id="RHEA-COMP:13540"/>
        <dbReference type="ChEBI" id="CHEBI:15378"/>
        <dbReference type="ChEBI" id="CHEBI:57783"/>
        <dbReference type="ChEBI" id="CHEBI:58349"/>
        <dbReference type="ChEBI" id="CHEBI:65315"/>
        <dbReference type="ChEBI" id="CHEBI:74443"/>
        <dbReference type="EC" id="1.3.1.89"/>
    </reaction>
    <physiologicalReaction direction="right-to-left" evidence="1">
        <dbReference type="Rhea" id="RHEA:53362"/>
    </physiologicalReaction>
</comment>
<comment type="catalytic activity">
    <reaction evidence="3">
        <text>a 5,6-dihydrouridine in mRNA + NAD(+) = a uridine in mRNA + NADH + H(+)</text>
        <dbReference type="Rhea" id="RHEA:69851"/>
        <dbReference type="Rhea" id="RHEA-COMP:14658"/>
        <dbReference type="Rhea" id="RHEA-COMP:17789"/>
        <dbReference type="ChEBI" id="CHEBI:15378"/>
        <dbReference type="ChEBI" id="CHEBI:57540"/>
        <dbReference type="ChEBI" id="CHEBI:57945"/>
        <dbReference type="ChEBI" id="CHEBI:65315"/>
        <dbReference type="ChEBI" id="CHEBI:74443"/>
    </reaction>
    <physiologicalReaction direction="right-to-left" evidence="3">
        <dbReference type="Rhea" id="RHEA:69853"/>
    </physiologicalReaction>
</comment>
<comment type="catalytic activity">
    <reaction evidence="3">
        <text>a 5,6-dihydrouridine in mRNA + NADP(+) = a uridine in mRNA + NADPH + H(+)</text>
        <dbReference type="Rhea" id="RHEA:69855"/>
        <dbReference type="Rhea" id="RHEA-COMP:14658"/>
        <dbReference type="Rhea" id="RHEA-COMP:17789"/>
        <dbReference type="ChEBI" id="CHEBI:15378"/>
        <dbReference type="ChEBI" id="CHEBI:57783"/>
        <dbReference type="ChEBI" id="CHEBI:58349"/>
        <dbReference type="ChEBI" id="CHEBI:65315"/>
        <dbReference type="ChEBI" id="CHEBI:74443"/>
    </reaction>
    <physiologicalReaction direction="right-to-left" evidence="3">
        <dbReference type="Rhea" id="RHEA:69857"/>
    </physiologicalReaction>
</comment>
<comment type="cofactor">
    <cofactor evidence="2">
        <name>FMN</name>
        <dbReference type="ChEBI" id="CHEBI:58210"/>
    </cofactor>
</comment>
<comment type="subcellular location">
    <subcellularLocation>
        <location evidence="1">Cytoplasm</location>
    </subcellularLocation>
    <subcellularLocation>
        <location evidence="1">Nucleus</location>
    </subcellularLocation>
</comment>
<comment type="similarity">
    <text evidence="6">Belongs to the Dus family. Dus3 subfamily.</text>
</comment>
<evidence type="ECO:0000250" key="1">
    <source>
        <dbReference type="UniProtKB" id="Q06053"/>
    </source>
</evidence>
<evidence type="ECO:0000250" key="2">
    <source>
        <dbReference type="UniProtKB" id="Q5SMC7"/>
    </source>
</evidence>
<evidence type="ECO:0000250" key="3">
    <source>
        <dbReference type="UniProtKB" id="Q9UTH9"/>
    </source>
</evidence>
<evidence type="ECO:0000255" key="4">
    <source>
        <dbReference type="PROSITE-ProRule" id="PRU00723"/>
    </source>
</evidence>
<evidence type="ECO:0000256" key="5">
    <source>
        <dbReference type="SAM" id="MobiDB-lite"/>
    </source>
</evidence>
<evidence type="ECO:0000305" key="6"/>
<dbReference type="EC" id="1.3.1.89" evidence="1"/>
<dbReference type="EC" id="1.3.1.-" evidence="3"/>
<dbReference type="EMBL" id="AM269986">
    <property type="protein sequence ID" value="CAK37330.1"/>
    <property type="molecule type" value="Genomic_DNA"/>
</dbReference>
<dbReference type="RefSeq" id="XP_001389685.1">
    <property type="nucleotide sequence ID" value="XM_001389648.2"/>
</dbReference>
<dbReference type="EnsemblFungi" id="CAK37330">
    <property type="protein sequence ID" value="CAK37330"/>
    <property type="gene ID" value="An01g12800"/>
</dbReference>
<dbReference type="GeneID" id="4977817"/>
<dbReference type="KEGG" id="ang:An01g12800"/>
<dbReference type="VEuPathDB" id="FungiDB:An01g12800"/>
<dbReference type="HOGENOM" id="CLU_013299_7_0_1"/>
<dbReference type="Proteomes" id="UP000006706">
    <property type="component" value="Chromosome 2R"/>
</dbReference>
<dbReference type="GO" id="GO:0005737">
    <property type="term" value="C:cytoplasm"/>
    <property type="evidence" value="ECO:0007669"/>
    <property type="project" value="UniProtKB-SubCell"/>
</dbReference>
<dbReference type="GO" id="GO:0034399">
    <property type="term" value="C:nuclear periphery"/>
    <property type="evidence" value="ECO:0007669"/>
    <property type="project" value="EnsemblFungi"/>
</dbReference>
<dbReference type="GO" id="GO:0050660">
    <property type="term" value="F:flavin adenine dinucleotide binding"/>
    <property type="evidence" value="ECO:0007669"/>
    <property type="project" value="InterPro"/>
</dbReference>
<dbReference type="GO" id="GO:0106414">
    <property type="term" value="F:mRNA dihydrouridine synthase activity"/>
    <property type="evidence" value="ECO:0007669"/>
    <property type="project" value="RHEA"/>
</dbReference>
<dbReference type="GO" id="GO:0003723">
    <property type="term" value="F:RNA binding"/>
    <property type="evidence" value="ECO:0007669"/>
    <property type="project" value="TreeGrafter"/>
</dbReference>
<dbReference type="GO" id="GO:0102265">
    <property type="term" value="F:tRNA-dihydrouridine47 synthase activity"/>
    <property type="evidence" value="ECO:0007669"/>
    <property type="project" value="UniProtKB-EC"/>
</dbReference>
<dbReference type="GO" id="GO:0008270">
    <property type="term" value="F:zinc ion binding"/>
    <property type="evidence" value="ECO:0007669"/>
    <property type="project" value="UniProtKB-KW"/>
</dbReference>
<dbReference type="GO" id="GO:0006397">
    <property type="term" value="P:mRNA processing"/>
    <property type="evidence" value="ECO:0007669"/>
    <property type="project" value="UniProtKB-KW"/>
</dbReference>
<dbReference type="CDD" id="cd02801">
    <property type="entry name" value="DUS_like_FMN"/>
    <property type="match status" value="1"/>
</dbReference>
<dbReference type="FunFam" id="3.20.20.70:FF:000145">
    <property type="entry name" value="tRNA-dihydrouridine(47) synthase [NAD(P)(+)]"/>
    <property type="match status" value="1"/>
</dbReference>
<dbReference type="Gene3D" id="3.20.20.70">
    <property type="entry name" value="Aldolase class I"/>
    <property type="match status" value="1"/>
</dbReference>
<dbReference type="InterPro" id="IPR013785">
    <property type="entry name" value="Aldolase_TIM"/>
</dbReference>
<dbReference type="InterPro" id="IPR035587">
    <property type="entry name" value="DUS-like_FMN-bd"/>
</dbReference>
<dbReference type="InterPro" id="IPR018517">
    <property type="entry name" value="tRNA_hU_synthase_CS"/>
</dbReference>
<dbReference type="InterPro" id="IPR000571">
    <property type="entry name" value="Znf_CCCH"/>
</dbReference>
<dbReference type="PANTHER" id="PTHR45846">
    <property type="entry name" value="TRNA-DIHYDROURIDINE(47) SYNTHASE [NAD(P)(+)]-LIKE"/>
    <property type="match status" value="1"/>
</dbReference>
<dbReference type="PANTHER" id="PTHR45846:SF1">
    <property type="entry name" value="TRNA-DIHYDROURIDINE(47) SYNTHASE [NAD(P)(+)]-LIKE"/>
    <property type="match status" value="1"/>
</dbReference>
<dbReference type="Pfam" id="PF01207">
    <property type="entry name" value="Dus"/>
    <property type="match status" value="2"/>
</dbReference>
<dbReference type="SUPFAM" id="SSF51395">
    <property type="entry name" value="FMN-linked oxidoreductases"/>
    <property type="match status" value="1"/>
</dbReference>
<dbReference type="PROSITE" id="PS01136">
    <property type="entry name" value="UPF0034"/>
    <property type="match status" value="1"/>
</dbReference>
<dbReference type="PROSITE" id="PS50103">
    <property type="entry name" value="ZF_C3H1"/>
    <property type="match status" value="2"/>
</dbReference>
<sequence>MEPTTAQEQLPAPEQLPAPEANAPKRDPENGDAAADHQAQEPPSKKARLDDSADSNGQTADAPAPRMKGVAPIKPEFIIDQQPTRGQTASDANADDAAEAAHHDGRADEQNGKKKKKKTGQNTNRTFGRSEDAKGLCSSVNFRPEFSPAECTFGEKCRYEHDLRTYLKEHKREDLTTFNGMCPVWDVHGKCFVGWKCRFVGSHSEERETADGRKELVLIEDEERKKKVQRLVPFAGEDGAVNVASMEDKIALARRKMDFPRAGPYSAWLENTSRTIEKELHKRHRAAPVGAETKDGESKDAESKDADSKDEKEENRAMYVEPPFMPSEKRRLYFGPETPALAPLTTQGNMPFRRLCVELGAQFTYSEMAMSLPLIQGNKSEWALMRAHESEMLPPTMLPGADIVQGYDNSKDMKFGAQIAANKPWQAFKATEALAKVTPNLRVIDLNCGCPIDLVFKDGAGSALLEHPSKLEKIIRGMNTVSDQIPITVKIRMGTKDNNPNALKLTERLLLGGYETSLLHHDGAAGAAAITLHGRSRQQRYTRQADWEYISECAALIKRLNEKTDAVTDTIREPDARTQPNGGKVYFLGNGDCYSHVDYDNHINNAGVDAVMLGRGPLIKPWLFEEIQAGQYLDKSATERLAMIEKFCKYGLEAWGSDEHGVGTTRRFLMEWLSFTRRYVPIGLLEHLPPYINDRPPAFRGRNELETLLASANYKDWLKISEMFLGPAHKDFKFEPKHKSNSYDEAEG</sequence>
<name>DUS3_ASPNC</name>
<organism>
    <name type="scientific">Aspergillus niger (strain ATCC MYA-4892 / CBS 513.88 / FGSC A1513)</name>
    <dbReference type="NCBI Taxonomy" id="425011"/>
    <lineage>
        <taxon>Eukaryota</taxon>
        <taxon>Fungi</taxon>
        <taxon>Dikarya</taxon>
        <taxon>Ascomycota</taxon>
        <taxon>Pezizomycotina</taxon>
        <taxon>Eurotiomycetes</taxon>
        <taxon>Eurotiomycetidae</taxon>
        <taxon>Eurotiales</taxon>
        <taxon>Aspergillaceae</taxon>
        <taxon>Aspergillus</taxon>
        <taxon>Aspergillus subgen. Circumdati</taxon>
    </lineage>
</organism>
<keyword id="KW-0963">Cytoplasm</keyword>
<keyword id="KW-0285">Flavoprotein</keyword>
<keyword id="KW-0288">FMN</keyword>
<keyword id="KW-0479">Metal-binding</keyword>
<keyword id="KW-0507">mRNA processing</keyword>
<keyword id="KW-0520">NAD</keyword>
<keyword id="KW-0521">NADP</keyword>
<keyword id="KW-0539">Nucleus</keyword>
<keyword id="KW-0560">Oxidoreductase</keyword>
<keyword id="KW-1185">Reference proteome</keyword>
<keyword id="KW-0677">Repeat</keyword>
<keyword id="KW-0819">tRNA processing</keyword>
<keyword id="KW-0862">Zinc</keyword>
<keyword id="KW-0863">Zinc-finger</keyword>